<protein>
    <recommendedName>
        <fullName evidence="1">Glycine--tRNA ligase alpha subunit</fullName>
        <ecNumber evidence="1">6.1.1.14</ecNumber>
    </recommendedName>
    <alternativeName>
        <fullName evidence="1">Glycyl-tRNA synthetase alpha subunit</fullName>
        <shortName evidence="1">GlyRS</shortName>
    </alternativeName>
</protein>
<sequence length="307" mass="35352">MTEKLSMQAIILKLQQYWSAQGCMLMQAYDTEKGAGTMSPYTFLRAIGPEPWNAAYVEPSRRPADGRYGENPNRLYQHHQFQVIMKPSPDNIQELYLNSLKELGIDPLEHDIRFVEDNWENPSMGCAGVGWEVWLDGMEITQFTYFQVVGGMEVDPVTSEVTYGLERLASYIQDVNSVFDLEWADGVKYGDIFKEPEYEHSKYSFEESNQDMLLRHFDEFEDEAKKQIANGLVHPAYDYVLKCSHTFNLLDARGAVSVTERAGYLSRIRNMARSIARAFVAERKKRGFPLVKDEKLRQQLLADEEAK</sequence>
<reference key="1">
    <citation type="journal article" date="2006" name="Proc. Natl. Acad. Sci. U.S.A.">
        <title>Comparative genomics of the lactic acid bacteria.</title>
        <authorList>
            <person name="Makarova K.S."/>
            <person name="Slesarev A."/>
            <person name="Wolf Y.I."/>
            <person name="Sorokin A."/>
            <person name="Mirkin B."/>
            <person name="Koonin E.V."/>
            <person name="Pavlov A."/>
            <person name="Pavlova N."/>
            <person name="Karamychev V."/>
            <person name="Polouchine N."/>
            <person name="Shakhova V."/>
            <person name="Grigoriev I."/>
            <person name="Lou Y."/>
            <person name="Rohksar D."/>
            <person name="Lucas S."/>
            <person name="Huang K."/>
            <person name="Goodstein D.M."/>
            <person name="Hawkins T."/>
            <person name="Plengvidhya V."/>
            <person name="Welker D."/>
            <person name="Hughes J."/>
            <person name="Goh Y."/>
            <person name="Benson A."/>
            <person name="Baldwin K."/>
            <person name="Lee J.-H."/>
            <person name="Diaz-Muniz I."/>
            <person name="Dosti B."/>
            <person name="Smeianov V."/>
            <person name="Wechter W."/>
            <person name="Barabote R."/>
            <person name="Lorca G."/>
            <person name="Altermann E."/>
            <person name="Barrangou R."/>
            <person name="Ganesan B."/>
            <person name="Xie Y."/>
            <person name="Rawsthorne H."/>
            <person name="Tamir D."/>
            <person name="Parker C."/>
            <person name="Breidt F."/>
            <person name="Broadbent J.R."/>
            <person name="Hutkins R."/>
            <person name="O'Sullivan D."/>
            <person name="Steele J."/>
            <person name="Unlu G."/>
            <person name="Saier M.H. Jr."/>
            <person name="Klaenhammer T."/>
            <person name="Richardson P."/>
            <person name="Kozyavkin S."/>
            <person name="Weimer B.C."/>
            <person name="Mills D.A."/>
        </authorList>
    </citation>
    <scope>NUCLEOTIDE SEQUENCE [LARGE SCALE GENOMIC DNA]</scope>
    <source>
        <strain>ATCC 367 / BCRC 12310 / CIP 105137 / JCM 1170 / LMG 11437 / NCIMB 947 / NCTC 947</strain>
    </source>
</reference>
<keyword id="KW-0030">Aminoacyl-tRNA synthetase</keyword>
<keyword id="KW-0067">ATP-binding</keyword>
<keyword id="KW-0963">Cytoplasm</keyword>
<keyword id="KW-0436">Ligase</keyword>
<keyword id="KW-0547">Nucleotide-binding</keyword>
<keyword id="KW-0648">Protein biosynthesis</keyword>
<keyword id="KW-1185">Reference proteome</keyword>
<gene>
    <name evidence="1" type="primary">glyQ</name>
    <name type="ordered locus">LVIS_0753</name>
</gene>
<organism>
    <name type="scientific">Levilactobacillus brevis (strain ATCC 367 / BCRC 12310 / CIP 105137 / JCM 1170 / LMG 11437 / NCIMB 947 / NCTC 947)</name>
    <name type="common">Lactobacillus brevis</name>
    <dbReference type="NCBI Taxonomy" id="387344"/>
    <lineage>
        <taxon>Bacteria</taxon>
        <taxon>Bacillati</taxon>
        <taxon>Bacillota</taxon>
        <taxon>Bacilli</taxon>
        <taxon>Lactobacillales</taxon>
        <taxon>Lactobacillaceae</taxon>
        <taxon>Levilactobacillus</taxon>
    </lineage>
</organism>
<accession>Q03SC6</accession>
<name>SYGA_LEVBA</name>
<comment type="catalytic activity">
    <reaction evidence="1">
        <text>tRNA(Gly) + glycine + ATP = glycyl-tRNA(Gly) + AMP + diphosphate</text>
        <dbReference type="Rhea" id="RHEA:16013"/>
        <dbReference type="Rhea" id="RHEA-COMP:9664"/>
        <dbReference type="Rhea" id="RHEA-COMP:9683"/>
        <dbReference type="ChEBI" id="CHEBI:30616"/>
        <dbReference type="ChEBI" id="CHEBI:33019"/>
        <dbReference type="ChEBI" id="CHEBI:57305"/>
        <dbReference type="ChEBI" id="CHEBI:78442"/>
        <dbReference type="ChEBI" id="CHEBI:78522"/>
        <dbReference type="ChEBI" id="CHEBI:456215"/>
        <dbReference type="EC" id="6.1.1.14"/>
    </reaction>
</comment>
<comment type="subunit">
    <text evidence="1">Tetramer of two alpha and two beta subunits.</text>
</comment>
<comment type="subcellular location">
    <subcellularLocation>
        <location evidence="1">Cytoplasm</location>
    </subcellularLocation>
</comment>
<comment type="similarity">
    <text evidence="1">Belongs to the class-II aminoacyl-tRNA synthetase family.</text>
</comment>
<proteinExistence type="inferred from homology"/>
<dbReference type="EC" id="6.1.1.14" evidence="1"/>
<dbReference type="EMBL" id="CP000416">
    <property type="protein sequence ID" value="ABJ63896.1"/>
    <property type="molecule type" value="Genomic_DNA"/>
</dbReference>
<dbReference type="RefSeq" id="WP_011667527.1">
    <property type="nucleotide sequence ID" value="NC_008497.1"/>
</dbReference>
<dbReference type="SMR" id="Q03SC6"/>
<dbReference type="STRING" id="387344.LVIS_0753"/>
<dbReference type="GeneID" id="56993056"/>
<dbReference type="KEGG" id="lbr:LVIS_0753"/>
<dbReference type="eggNOG" id="COG0752">
    <property type="taxonomic scope" value="Bacteria"/>
</dbReference>
<dbReference type="HOGENOM" id="CLU_057066_1_0_9"/>
<dbReference type="Proteomes" id="UP000001652">
    <property type="component" value="Chromosome"/>
</dbReference>
<dbReference type="GO" id="GO:0005829">
    <property type="term" value="C:cytosol"/>
    <property type="evidence" value="ECO:0007669"/>
    <property type="project" value="TreeGrafter"/>
</dbReference>
<dbReference type="GO" id="GO:0005524">
    <property type="term" value="F:ATP binding"/>
    <property type="evidence" value="ECO:0007669"/>
    <property type="project" value="UniProtKB-UniRule"/>
</dbReference>
<dbReference type="GO" id="GO:0140096">
    <property type="term" value="F:catalytic activity, acting on a protein"/>
    <property type="evidence" value="ECO:0007669"/>
    <property type="project" value="UniProtKB-ARBA"/>
</dbReference>
<dbReference type="GO" id="GO:0004820">
    <property type="term" value="F:glycine-tRNA ligase activity"/>
    <property type="evidence" value="ECO:0007669"/>
    <property type="project" value="UniProtKB-UniRule"/>
</dbReference>
<dbReference type="GO" id="GO:0016740">
    <property type="term" value="F:transferase activity"/>
    <property type="evidence" value="ECO:0007669"/>
    <property type="project" value="UniProtKB-ARBA"/>
</dbReference>
<dbReference type="GO" id="GO:0006426">
    <property type="term" value="P:glycyl-tRNA aminoacylation"/>
    <property type="evidence" value="ECO:0007669"/>
    <property type="project" value="UniProtKB-UniRule"/>
</dbReference>
<dbReference type="CDD" id="cd00733">
    <property type="entry name" value="GlyRS_alpha_core"/>
    <property type="match status" value="1"/>
</dbReference>
<dbReference type="FunFam" id="3.30.930.10:FF:000006">
    <property type="entry name" value="Glycine--tRNA ligase alpha subunit"/>
    <property type="match status" value="1"/>
</dbReference>
<dbReference type="Gene3D" id="3.30.930.10">
    <property type="entry name" value="Bira Bifunctional Protein, Domain 2"/>
    <property type="match status" value="1"/>
</dbReference>
<dbReference type="Gene3D" id="1.20.58.180">
    <property type="entry name" value="Class II aaRS and biotin synthetases, domain 2"/>
    <property type="match status" value="1"/>
</dbReference>
<dbReference type="HAMAP" id="MF_00254">
    <property type="entry name" value="Gly_tRNA_synth_alpha"/>
    <property type="match status" value="1"/>
</dbReference>
<dbReference type="InterPro" id="IPR045864">
    <property type="entry name" value="aa-tRNA-synth_II/BPL/LPL"/>
</dbReference>
<dbReference type="InterPro" id="IPR006194">
    <property type="entry name" value="Gly-tRNA-synth_heterodimer"/>
</dbReference>
<dbReference type="InterPro" id="IPR002310">
    <property type="entry name" value="Gly-tRNA_ligase_asu"/>
</dbReference>
<dbReference type="NCBIfam" id="TIGR00388">
    <property type="entry name" value="glyQ"/>
    <property type="match status" value="1"/>
</dbReference>
<dbReference type="NCBIfam" id="NF006827">
    <property type="entry name" value="PRK09348.1"/>
    <property type="match status" value="1"/>
</dbReference>
<dbReference type="PANTHER" id="PTHR30075:SF2">
    <property type="entry name" value="GLYCINE--TRNA LIGASE, CHLOROPLASTIC_MITOCHONDRIAL 2"/>
    <property type="match status" value="1"/>
</dbReference>
<dbReference type="PANTHER" id="PTHR30075">
    <property type="entry name" value="GLYCYL-TRNA SYNTHETASE"/>
    <property type="match status" value="1"/>
</dbReference>
<dbReference type="Pfam" id="PF02091">
    <property type="entry name" value="tRNA-synt_2e"/>
    <property type="match status" value="1"/>
</dbReference>
<dbReference type="PRINTS" id="PR01044">
    <property type="entry name" value="TRNASYNTHGA"/>
</dbReference>
<dbReference type="SUPFAM" id="SSF55681">
    <property type="entry name" value="Class II aaRS and biotin synthetases"/>
    <property type="match status" value="1"/>
</dbReference>
<dbReference type="PROSITE" id="PS50861">
    <property type="entry name" value="AA_TRNA_LIGASE_II_GLYAB"/>
    <property type="match status" value="1"/>
</dbReference>
<evidence type="ECO:0000255" key="1">
    <source>
        <dbReference type="HAMAP-Rule" id="MF_00254"/>
    </source>
</evidence>
<feature type="chain" id="PRO_1000047436" description="Glycine--tRNA ligase alpha subunit">
    <location>
        <begin position="1"/>
        <end position="307"/>
    </location>
</feature>